<sequence length="332" mass="36348">MAELFYDADADLSIIQGRKVAVIGYGSQGHAHALSLRDSGVDVRVGLHEGSKSKAKAEEQGLRVVPVAEAAAEADVIMILVPDPIQAEVYEKDIKDNLKDGDALFFGHGLNIRYGFVKPPAGVDVCMVAPKGPGHLVRRQYEEGRGVPCLVAVEQDATGNAFALALSYAKGIGGTRAGVIRTTFTEETETDLFGEQAVLAGGVTALVKAGFETLTEAGYQPEIAYFECLHELKLIVDLMYEGGLEKMRWSISETAEWGDYVTGPRIITDVTKAEMRKVLAEIQDGTFAKNWMDEYHGGLKKYNEYKKQDSEHLLETTGKELRKLMSWVDEEA</sequence>
<protein>
    <recommendedName>
        <fullName evidence="1">Ketol-acid reductoisomerase (NADP(+)) 2</fullName>
        <shortName evidence="1">KARI 2</shortName>
        <ecNumber evidence="1">1.1.1.86</ecNumber>
    </recommendedName>
    <alternativeName>
        <fullName evidence="1">Acetohydroxy-acid isomeroreductase 2</fullName>
        <shortName evidence="1">AHIR 2</shortName>
    </alternativeName>
    <alternativeName>
        <fullName evidence="1">Alpha-keto-beta-hydroxylacyl reductoisomerase 2</fullName>
    </alternativeName>
    <alternativeName>
        <fullName evidence="1">Ketol-acid reductoisomerase type 1</fullName>
    </alternativeName>
    <alternativeName>
        <fullName evidence="1">Ketol-acid reductoisomerase type I</fullName>
    </alternativeName>
</protein>
<feature type="chain" id="PRO_0000151364" description="Ketol-acid reductoisomerase (NADP(+)) 2">
    <location>
        <begin position="1"/>
        <end position="332"/>
    </location>
</feature>
<feature type="domain" description="KARI N-terminal Rossmann" evidence="2">
    <location>
        <begin position="2"/>
        <end position="182"/>
    </location>
</feature>
<feature type="domain" description="KARI C-terminal knotted" evidence="3">
    <location>
        <begin position="183"/>
        <end position="328"/>
    </location>
</feature>
<feature type="active site" evidence="1">
    <location>
        <position position="108"/>
    </location>
</feature>
<feature type="binding site" evidence="1">
    <location>
        <begin position="25"/>
        <end position="28"/>
    </location>
    <ligand>
        <name>NADP(+)</name>
        <dbReference type="ChEBI" id="CHEBI:58349"/>
    </ligand>
</feature>
<feature type="binding site" evidence="1">
    <location>
        <position position="51"/>
    </location>
    <ligand>
        <name>NADP(+)</name>
        <dbReference type="ChEBI" id="CHEBI:58349"/>
    </ligand>
</feature>
<feature type="binding site" evidence="1">
    <location>
        <position position="53"/>
    </location>
    <ligand>
        <name>NADP(+)</name>
        <dbReference type="ChEBI" id="CHEBI:58349"/>
    </ligand>
</feature>
<feature type="binding site" evidence="1">
    <location>
        <begin position="83"/>
        <end position="86"/>
    </location>
    <ligand>
        <name>NADP(+)</name>
        <dbReference type="ChEBI" id="CHEBI:58349"/>
    </ligand>
</feature>
<feature type="binding site" evidence="1">
    <location>
        <position position="134"/>
    </location>
    <ligand>
        <name>NADP(+)</name>
        <dbReference type="ChEBI" id="CHEBI:58349"/>
    </ligand>
</feature>
<feature type="binding site" evidence="1">
    <location>
        <position position="191"/>
    </location>
    <ligand>
        <name>Mg(2+)</name>
        <dbReference type="ChEBI" id="CHEBI:18420"/>
        <label>1</label>
    </ligand>
</feature>
<feature type="binding site" evidence="1">
    <location>
        <position position="191"/>
    </location>
    <ligand>
        <name>Mg(2+)</name>
        <dbReference type="ChEBI" id="CHEBI:18420"/>
        <label>2</label>
    </ligand>
</feature>
<feature type="binding site" evidence="1">
    <location>
        <position position="195"/>
    </location>
    <ligand>
        <name>Mg(2+)</name>
        <dbReference type="ChEBI" id="CHEBI:18420"/>
        <label>1</label>
    </ligand>
</feature>
<feature type="binding site" evidence="1">
    <location>
        <position position="227"/>
    </location>
    <ligand>
        <name>Mg(2+)</name>
        <dbReference type="ChEBI" id="CHEBI:18420"/>
        <label>2</label>
    </ligand>
</feature>
<feature type="binding site" evidence="1">
    <location>
        <position position="231"/>
    </location>
    <ligand>
        <name>Mg(2+)</name>
        <dbReference type="ChEBI" id="CHEBI:18420"/>
        <label>2</label>
    </ligand>
</feature>
<feature type="binding site" evidence="1">
    <location>
        <position position="252"/>
    </location>
    <ligand>
        <name>substrate</name>
    </ligand>
</feature>
<name>ILVC2_STRCO</name>
<dbReference type="EC" id="1.1.1.86" evidence="1"/>
<dbReference type="EMBL" id="AL939130">
    <property type="protein sequence ID" value="CAC01643.1"/>
    <property type="molecule type" value="Genomic_DNA"/>
</dbReference>
<dbReference type="RefSeq" id="NP_631213.1">
    <property type="nucleotide sequence ID" value="NC_003888.3"/>
</dbReference>
<dbReference type="RefSeq" id="WP_011031465.1">
    <property type="nucleotide sequence ID" value="NZ_CP042324.1"/>
</dbReference>
<dbReference type="SMR" id="Q9FBT8"/>
<dbReference type="FunCoup" id="Q9FBT8">
    <property type="interactions" value="278"/>
</dbReference>
<dbReference type="STRING" id="100226.gene:17764814"/>
<dbReference type="PaxDb" id="100226-SCO7154"/>
<dbReference type="KEGG" id="sco:SCO7154"/>
<dbReference type="PATRIC" id="fig|100226.15.peg.7255"/>
<dbReference type="eggNOG" id="COG0059">
    <property type="taxonomic scope" value="Bacteria"/>
</dbReference>
<dbReference type="HOGENOM" id="CLU_033821_0_1_11"/>
<dbReference type="InParanoid" id="Q9FBT8"/>
<dbReference type="OrthoDB" id="9804088at2"/>
<dbReference type="PhylomeDB" id="Q9FBT8"/>
<dbReference type="BRENDA" id="1.1.1.86">
    <property type="organism ID" value="5998"/>
</dbReference>
<dbReference type="UniPathway" id="UPA00047">
    <property type="reaction ID" value="UER00056"/>
</dbReference>
<dbReference type="UniPathway" id="UPA00049">
    <property type="reaction ID" value="UER00060"/>
</dbReference>
<dbReference type="Proteomes" id="UP000001973">
    <property type="component" value="Chromosome"/>
</dbReference>
<dbReference type="GO" id="GO:0005829">
    <property type="term" value="C:cytosol"/>
    <property type="evidence" value="ECO:0000318"/>
    <property type="project" value="GO_Central"/>
</dbReference>
<dbReference type="GO" id="GO:0004455">
    <property type="term" value="F:ketol-acid reductoisomerase activity"/>
    <property type="evidence" value="ECO:0000318"/>
    <property type="project" value="GO_Central"/>
</dbReference>
<dbReference type="GO" id="GO:0000287">
    <property type="term" value="F:magnesium ion binding"/>
    <property type="evidence" value="ECO:0007669"/>
    <property type="project" value="UniProtKB-UniRule"/>
</dbReference>
<dbReference type="GO" id="GO:0050661">
    <property type="term" value="F:NADP binding"/>
    <property type="evidence" value="ECO:0007669"/>
    <property type="project" value="InterPro"/>
</dbReference>
<dbReference type="GO" id="GO:0009097">
    <property type="term" value="P:isoleucine biosynthetic process"/>
    <property type="evidence" value="ECO:0000318"/>
    <property type="project" value="GO_Central"/>
</dbReference>
<dbReference type="GO" id="GO:0009099">
    <property type="term" value="P:L-valine biosynthetic process"/>
    <property type="evidence" value="ECO:0000318"/>
    <property type="project" value="GO_Central"/>
</dbReference>
<dbReference type="FunFam" id="3.40.50.720:FF:000023">
    <property type="entry name" value="Ketol-acid reductoisomerase (NADP(+))"/>
    <property type="match status" value="1"/>
</dbReference>
<dbReference type="Gene3D" id="6.10.240.10">
    <property type="match status" value="1"/>
</dbReference>
<dbReference type="Gene3D" id="3.40.50.720">
    <property type="entry name" value="NAD(P)-binding Rossmann-like Domain"/>
    <property type="match status" value="1"/>
</dbReference>
<dbReference type="HAMAP" id="MF_00435">
    <property type="entry name" value="IlvC"/>
    <property type="match status" value="1"/>
</dbReference>
<dbReference type="InterPro" id="IPR008927">
    <property type="entry name" value="6-PGluconate_DH-like_C_sf"/>
</dbReference>
<dbReference type="InterPro" id="IPR013023">
    <property type="entry name" value="KARI"/>
</dbReference>
<dbReference type="InterPro" id="IPR000506">
    <property type="entry name" value="KARI_C"/>
</dbReference>
<dbReference type="InterPro" id="IPR013116">
    <property type="entry name" value="KARI_N"/>
</dbReference>
<dbReference type="InterPro" id="IPR014359">
    <property type="entry name" value="KARI_prok"/>
</dbReference>
<dbReference type="InterPro" id="IPR036291">
    <property type="entry name" value="NAD(P)-bd_dom_sf"/>
</dbReference>
<dbReference type="NCBIfam" id="TIGR00465">
    <property type="entry name" value="ilvC"/>
    <property type="match status" value="1"/>
</dbReference>
<dbReference type="NCBIfam" id="NF004017">
    <property type="entry name" value="PRK05479.1"/>
    <property type="match status" value="1"/>
</dbReference>
<dbReference type="NCBIfam" id="NF009940">
    <property type="entry name" value="PRK13403.1"/>
    <property type="match status" value="1"/>
</dbReference>
<dbReference type="PANTHER" id="PTHR21371">
    <property type="entry name" value="KETOL-ACID REDUCTOISOMERASE, MITOCHONDRIAL"/>
    <property type="match status" value="1"/>
</dbReference>
<dbReference type="PANTHER" id="PTHR21371:SF1">
    <property type="entry name" value="KETOL-ACID REDUCTOISOMERASE, MITOCHONDRIAL"/>
    <property type="match status" value="1"/>
</dbReference>
<dbReference type="Pfam" id="PF01450">
    <property type="entry name" value="KARI_C"/>
    <property type="match status" value="1"/>
</dbReference>
<dbReference type="Pfam" id="PF07991">
    <property type="entry name" value="KARI_N"/>
    <property type="match status" value="1"/>
</dbReference>
<dbReference type="PIRSF" id="PIRSF000116">
    <property type="entry name" value="IlvC_gammaproteo"/>
    <property type="match status" value="1"/>
</dbReference>
<dbReference type="SUPFAM" id="SSF48179">
    <property type="entry name" value="6-phosphogluconate dehydrogenase C-terminal domain-like"/>
    <property type="match status" value="1"/>
</dbReference>
<dbReference type="SUPFAM" id="SSF51735">
    <property type="entry name" value="NAD(P)-binding Rossmann-fold domains"/>
    <property type="match status" value="1"/>
</dbReference>
<dbReference type="PROSITE" id="PS51851">
    <property type="entry name" value="KARI_C"/>
    <property type="match status" value="1"/>
</dbReference>
<dbReference type="PROSITE" id="PS51850">
    <property type="entry name" value="KARI_N"/>
    <property type="match status" value="1"/>
</dbReference>
<accession>Q9FBT8</accession>
<gene>
    <name evidence="1" type="primary">ilvC2</name>
    <name type="ordered locus">SCO7154</name>
    <name type="ORF">SC9A4.16c</name>
</gene>
<organism>
    <name type="scientific">Streptomyces coelicolor (strain ATCC BAA-471 / A3(2) / M145)</name>
    <dbReference type="NCBI Taxonomy" id="100226"/>
    <lineage>
        <taxon>Bacteria</taxon>
        <taxon>Bacillati</taxon>
        <taxon>Actinomycetota</taxon>
        <taxon>Actinomycetes</taxon>
        <taxon>Kitasatosporales</taxon>
        <taxon>Streptomycetaceae</taxon>
        <taxon>Streptomyces</taxon>
        <taxon>Streptomyces albidoflavus group</taxon>
    </lineage>
</organism>
<evidence type="ECO:0000255" key="1">
    <source>
        <dbReference type="HAMAP-Rule" id="MF_00435"/>
    </source>
</evidence>
<evidence type="ECO:0000255" key="2">
    <source>
        <dbReference type="PROSITE-ProRule" id="PRU01197"/>
    </source>
</evidence>
<evidence type="ECO:0000255" key="3">
    <source>
        <dbReference type="PROSITE-ProRule" id="PRU01198"/>
    </source>
</evidence>
<reference key="1">
    <citation type="journal article" date="2002" name="Nature">
        <title>Complete genome sequence of the model actinomycete Streptomyces coelicolor A3(2).</title>
        <authorList>
            <person name="Bentley S.D."/>
            <person name="Chater K.F."/>
            <person name="Cerdeno-Tarraga A.-M."/>
            <person name="Challis G.L."/>
            <person name="Thomson N.R."/>
            <person name="James K.D."/>
            <person name="Harris D.E."/>
            <person name="Quail M.A."/>
            <person name="Kieser H."/>
            <person name="Harper D."/>
            <person name="Bateman A."/>
            <person name="Brown S."/>
            <person name="Chandra G."/>
            <person name="Chen C.W."/>
            <person name="Collins M."/>
            <person name="Cronin A."/>
            <person name="Fraser A."/>
            <person name="Goble A."/>
            <person name="Hidalgo J."/>
            <person name="Hornsby T."/>
            <person name="Howarth S."/>
            <person name="Huang C.-H."/>
            <person name="Kieser T."/>
            <person name="Larke L."/>
            <person name="Murphy L.D."/>
            <person name="Oliver K."/>
            <person name="O'Neil S."/>
            <person name="Rabbinowitsch E."/>
            <person name="Rajandream M.A."/>
            <person name="Rutherford K.M."/>
            <person name="Rutter S."/>
            <person name="Seeger K."/>
            <person name="Saunders D."/>
            <person name="Sharp S."/>
            <person name="Squares R."/>
            <person name="Squares S."/>
            <person name="Taylor K."/>
            <person name="Warren T."/>
            <person name="Wietzorrek A."/>
            <person name="Woodward J.R."/>
            <person name="Barrell B.G."/>
            <person name="Parkhill J."/>
            <person name="Hopwood D.A."/>
        </authorList>
    </citation>
    <scope>NUCLEOTIDE SEQUENCE [LARGE SCALE GENOMIC DNA]</scope>
    <source>
        <strain>ATCC BAA-471 / A3(2) / M145</strain>
    </source>
</reference>
<keyword id="KW-0028">Amino-acid biosynthesis</keyword>
<keyword id="KW-0100">Branched-chain amino acid biosynthesis</keyword>
<keyword id="KW-0460">Magnesium</keyword>
<keyword id="KW-0479">Metal-binding</keyword>
<keyword id="KW-0521">NADP</keyword>
<keyword id="KW-0560">Oxidoreductase</keyword>
<keyword id="KW-1185">Reference proteome</keyword>
<comment type="function">
    <text evidence="1">Involved in the biosynthesis of branched-chain amino acids (BCAA). Catalyzes an alkyl-migration followed by a ketol-acid reduction of (S)-2-acetolactate (S2AL) to yield (R)-2,3-dihydroxy-isovalerate. In the isomerase reaction, S2AL is rearranged via a Mg-dependent methyl migration to produce 3-hydroxy-3-methyl-2-ketobutyrate (HMKB). In the reductase reaction, this 2-ketoacid undergoes a metal-dependent reduction by NADPH to yield (R)-2,3-dihydroxy-isovalerate.</text>
</comment>
<comment type="catalytic activity">
    <reaction evidence="1">
        <text>(2R)-2,3-dihydroxy-3-methylbutanoate + NADP(+) = (2S)-2-acetolactate + NADPH + H(+)</text>
        <dbReference type="Rhea" id="RHEA:22068"/>
        <dbReference type="ChEBI" id="CHEBI:15378"/>
        <dbReference type="ChEBI" id="CHEBI:49072"/>
        <dbReference type="ChEBI" id="CHEBI:57783"/>
        <dbReference type="ChEBI" id="CHEBI:58349"/>
        <dbReference type="ChEBI" id="CHEBI:58476"/>
        <dbReference type="EC" id="1.1.1.86"/>
    </reaction>
</comment>
<comment type="catalytic activity">
    <reaction evidence="1">
        <text>(2R,3R)-2,3-dihydroxy-3-methylpentanoate + NADP(+) = (S)-2-ethyl-2-hydroxy-3-oxobutanoate + NADPH + H(+)</text>
        <dbReference type="Rhea" id="RHEA:13493"/>
        <dbReference type="ChEBI" id="CHEBI:15378"/>
        <dbReference type="ChEBI" id="CHEBI:49256"/>
        <dbReference type="ChEBI" id="CHEBI:49258"/>
        <dbReference type="ChEBI" id="CHEBI:57783"/>
        <dbReference type="ChEBI" id="CHEBI:58349"/>
        <dbReference type="EC" id="1.1.1.86"/>
    </reaction>
</comment>
<comment type="cofactor">
    <cofactor evidence="1">
        <name>Mg(2+)</name>
        <dbReference type="ChEBI" id="CHEBI:18420"/>
    </cofactor>
    <text evidence="1">Binds 2 magnesium ions per subunit.</text>
</comment>
<comment type="pathway">
    <text evidence="1">Amino-acid biosynthesis; L-isoleucine biosynthesis; L-isoleucine from 2-oxobutanoate: step 2/4.</text>
</comment>
<comment type="pathway">
    <text evidence="1">Amino-acid biosynthesis; L-valine biosynthesis; L-valine from pyruvate: step 2/4.</text>
</comment>
<comment type="similarity">
    <text evidence="1">Belongs to the ketol-acid reductoisomerase family.</text>
</comment>
<proteinExistence type="inferred from homology"/>